<dbReference type="EMBL" id="KY652738">
    <property type="protein sequence ID" value="ASF62178.1"/>
    <property type="molecule type" value="Genomic_DNA"/>
</dbReference>
<dbReference type="SMR" id="A0A218N034"/>
<dbReference type="GO" id="GO:0072324">
    <property type="term" value="C:ascus epiplasm"/>
    <property type="evidence" value="ECO:0000314"/>
    <property type="project" value="UniProtKB"/>
</dbReference>
<dbReference type="GO" id="GO:0005737">
    <property type="term" value="C:cytoplasm"/>
    <property type="evidence" value="ECO:0000314"/>
    <property type="project" value="UniProtKB"/>
</dbReference>
<dbReference type="GO" id="GO:0005789">
    <property type="term" value="C:endoplasmic reticulum membrane"/>
    <property type="evidence" value="ECO:0007669"/>
    <property type="project" value="UniProtKB-SubCell"/>
</dbReference>
<dbReference type="GO" id="GO:0016020">
    <property type="term" value="C:membrane"/>
    <property type="evidence" value="ECO:0000314"/>
    <property type="project" value="UniProtKB"/>
</dbReference>
<dbReference type="GO" id="GO:0097038">
    <property type="term" value="C:perinuclear endoplasmic reticulum"/>
    <property type="evidence" value="ECO:0000314"/>
    <property type="project" value="UniProtKB"/>
</dbReference>
<dbReference type="GO" id="GO:0005774">
    <property type="term" value="C:vacuolar membrane"/>
    <property type="evidence" value="ECO:0007669"/>
    <property type="project" value="UniProtKB-SubCell"/>
</dbReference>
<dbReference type="GO" id="GO:0005773">
    <property type="term" value="C:vacuole"/>
    <property type="evidence" value="ECO:0000314"/>
    <property type="project" value="UniProtKB"/>
</dbReference>
<dbReference type="GO" id="GO:0110134">
    <property type="term" value="P:meiotic drive"/>
    <property type="evidence" value="ECO:0000314"/>
    <property type="project" value="UniProtKB"/>
</dbReference>
<dbReference type="GO" id="GO:0072665">
    <property type="term" value="P:protein localization to vacuole"/>
    <property type="evidence" value="ECO:0000314"/>
    <property type="project" value="UniProtKB"/>
</dbReference>
<dbReference type="InterPro" id="IPR004982">
    <property type="entry name" value="WTF"/>
</dbReference>
<dbReference type="Pfam" id="PF03303">
    <property type="entry name" value="WTF"/>
    <property type="match status" value="1"/>
</dbReference>
<organism evidence="11">
    <name type="scientific">Schizosaccharomyces kambucha</name>
    <name type="common">Fission yeast</name>
    <dbReference type="NCBI Taxonomy" id="204045"/>
    <lineage>
        <taxon>Eukaryota</taxon>
        <taxon>Fungi</taxon>
        <taxon>Dikarya</taxon>
        <taxon>Ascomycota</taxon>
        <taxon>Taphrinomycotina</taxon>
        <taxon>Schizosaccharomycetes</taxon>
        <taxon>Schizosaccharomycetales</taxon>
        <taxon>Schizosaccharomycetaceae</taxon>
        <taxon>Schizosaccharomyces</taxon>
    </lineage>
</organism>
<reference evidence="11" key="1">
    <citation type="journal article" date="2017" name="Elife">
        <title>wtf genes are prolific dual poison-antidote meiotic drivers.</title>
        <authorList>
            <person name="Nuckolls N.L."/>
            <person name="Bravo Nunez M.A."/>
            <person name="Eickbush M.T."/>
            <person name="Young J.M."/>
            <person name="Lange J.J."/>
            <person name="Yu J.S."/>
            <person name="Smith G.R."/>
            <person name="Jaspersen S.L."/>
            <person name="Malik H.S."/>
            <person name="Zanders S.E."/>
        </authorList>
    </citation>
    <scope>NUCLEOTIDE SEQUENCE [GENOMIC DNA]</scope>
    <scope>FUNCTION (ISOFORMS 1 AND 2)</scope>
    <scope>SUBCELLULAR LOCATION (ISOFORMS 1 AND 2)</scope>
    <scope>ALTERNATIVE INITIATION (ISOFORMS 1 AND 2)</scope>
    <scope>DISRUPTION PHENOTYPE</scope>
    <scope>MUTAGENESIS OF 1-MET--TYR-44</scope>
</reference>
<reference evidence="10" key="2">
    <citation type="journal article" date="2018" name="PLoS Genet.">
        <title>A suppressor of a wtf poison-antidote meiotic driver acts via mimicry of the driver's antidote.</title>
        <authorList>
            <person name="Bravo Nunez M.A."/>
            <person name="Lange J.J."/>
            <person name="Zanders S.E."/>
        </authorList>
    </citation>
    <scope>SUBCELLULAR LOCATION (ISOFORMS 1 AND 2)</scope>
</reference>
<reference evidence="10" key="3">
    <citation type="journal article" date="2020" name="Elife">
        <title>The wtf4 meiotic driver utilizes controlled protein aggregation to generate selective cell death.</title>
        <authorList>
            <person name="Nuckolls N.L."/>
            <person name="Mok A.C."/>
            <person name="Lange J.J."/>
            <person name="Yi K."/>
            <person name="Kandola T.S."/>
            <person name="Hunn A.M."/>
            <person name="McCroskey S."/>
            <person name="Snyder J.L."/>
            <person name="Bravo Nunez M.A."/>
            <person name="McClain M."/>
            <person name="McKinney S.A."/>
            <person name="Wood C."/>
            <person name="Halfmann R."/>
            <person name="Zanders S.E."/>
        </authorList>
    </citation>
    <scope>FUNCTION (ISOFORMS 1 AND 2)</scope>
    <scope>INTERACTION OF ISOFORMS 1 AND 2</scope>
    <scope>SUBCELLULAR LOCATION (ISOFORMS 1 AND 2)</scope>
    <scope>MUTAGENESIS OF ASN-312</scope>
</reference>
<reference evidence="10" key="4">
    <citation type="journal article" date="2020" name="Elife">
        <title>Atypical meiosis can be adaptive in outcrossed Schizosaccharomyces pombe due to wtf meiotic drivers.</title>
        <authorList>
            <person name="Bravo Nunez M.A."/>
            <person name="Sabbarini I.M."/>
            <person name="Eide L.E."/>
            <person name="Unckless R.L."/>
            <person name="Zanders S.E."/>
        </authorList>
    </citation>
    <scope>FUNCTION (ISOFORMS 1 AND 2)</scope>
</reference>
<reference evidence="10" key="5">
    <citation type="journal article" date="2020" name="PLoS Genet.">
        <title>Dramatically diverse Schizosaccharomyces pombe wtf meiotic drivers all display high gamete-killing efficiency.</title>
        <authorList>
            <person name="Bravo Nunez M.A."/>
            <person name="Sabbarini I.M."/>
            <person name="Eickbush M.T."/>
            <person name="Liang Y."/>
            <person name="Lange J.J."/>
            <person name="Kent A.M."/>
            <person name="Zanders S.E."/>
        </authorList>
    </citation>
    <scope>SUBCELLULAR LOCATION (ISOFORMS 1 AND 2)</scope>
</reference>
<proteinExistence type="evidence at protein level"/>
<accession>A0A218N034</accession>
<comment type="function">
    <text evidence="4 7 8">Promotes unequal transmission of alleles from the parental zygote to progeny spores by acting as poison/antidote system where the poison and antidote proteins are produced from the same locus; the poison component is trans-acting and targets all spores within an ascus whereas the antidote component is spore-specific, leading to poisoning of all progeny that do not inherit the allele.</text>
</comment>
<comment type="function">
    <molecule>Isoform 1</molecule>
    <text evidence="4 7 8">Localizes isoform 2 to the vacuole thereby facilitating its degradation.</text>
</comment>
<comment type="function">
    <molecule>Isoform 2</molecule>
    <text evidence="4 7 8">Forms toxic aggregates that disrupt spore maturation.</text>
</comment>
<comment type="subunit">
    <text evidence="1 8">Homomer (PubMed:33108274). Forms protein aggregates (PubMed:33108274). The two isoforms can interact with each other and with themselves (PubMed:33108274). High sequence similarity is required for their interaction (By similarity).</text>
</comment>
<comment type="subcellular location">
    <molecule>Isoform 1</molecule>
    <subcellularLocation>
        <location evidence="2 4 5 6 8">Spore membrane</location>
        <topology evidence="2">Multi-pass membrane protein</topology>
    </subcellularLocation>
    <subcellularLocation>
        <location evidence="2 8">Vacuole membrane</location>
        <topology evidence="2">Multi-pass membrane protein</topology>
    </subcellularLocation>
    <text evidence="4 5 8">Contained within spores expressing the isoform and localizes isoform 2 to the vacuole.</text>
</comment>
<comment type="subcellular location">
    <molecule>Isoform 2</molecule>
    <subcellularLocation>
        <location evidence="4 5 8">Ascus epiplasm</location>
    </subcellularLocation>
    <subcellularLocation>
        <location evidence="4">Cytoplasm</location>
    </subcellularLocation>
    <subcellularLocation>
        <location evidence="4 5 6 8">Spore membrane</location>
        <topology evidence="2">Multi-pass membrane protein</topology>
    </subcellularLocation>
    <subcellularLocation>
        <location evidence="2 8">Vacuole membrane</location>
        <topology evidence="2">Multi-pass membrane protein</topology>
    </subcellularLocation>
    <subcellularLocation>
        <location evidence="2 8">Endoplasmic reticulum membrane</location>
        <topology evidence="2">Multi-pass membrane protein</topology>
    </subcellularLocation>
    <text evidence="4 5 8">Localizes in trans to all spores within an ascus. Localization to the spore vacuole is dependent on isoform 1.</text>
</comment>
<comment type="alternative products">
    <event type="alternative initiation"/>
    <isoform>
        <id>A0A218N034-1</id>
        <name>1</name>
        <name evidence="9">Antidote</name>
        <name evidence="10">Suppressor</name>
        <sequence type="displayed"/>
    </isoform>
    <isoform>
        <id>A0A218N034-2</id>
        <name>2</name>
        <name evidence="9">Poison</name>
        <sequence type="described" ref="VSP_060931"/>
    </isoform>
</comment>
<comment type="developmental stage">
    <text evidence="4">Expressed during meiosis and sporulation (at protein level). Present in spores (at protein level).</text>
</comment>
<comment type="disruption phenotype">
    <text evidence="4">Sensitises cells to wtf4-encoded poison.</text>
</comment>
<comment type="similarity">
    <text evidence="10">Belongs to the WTF family.</text>
</comment>
<feature type="chain" id="PRO_0000452254" description="Meiotic driver wtf4">
    <location>
        <begin position="1"/>
        <end position="337"/>
    </location>
</feature>
<feature type="transmembrane region" description="Helical" evidence="2">
    <location>
        <begin position="89"/>
        <end position="109"/>
    </location>
</feature>
<feature type="transmembrane region" description="Helical" evidence="2">
    <location>
        <begin position="119"/>
        <end position="139"/>
    </location>
</feature>
<feature type="transmembrane region" description="Helical" evidence="2">
    <location>
        <begin position="149"/>
        <end position="169"/>
    </location>
</feature>
<feature type="transmembrane region" description="Helical" evidence="2">
    <location>
        <begin position="176"/>
        <end position="196"/>
    </location>
</feature>
<feature type="transmembrane region" description="Helical" evidence="2">
    <location>
        <begin position="210"/>
        <end position="230"/>
    </location>
</feature>
<feature type="transmembrane region" description="Helical" evidence="2">
    <location>
        <begin position="234"/>
        <end position="254"/>
    </location>
</feature>
<feature type="region of interest" description="Disordered" evidence="3">
    <location>
        <begin position="1"/>
        <end position="40"/>
    </location>
</feature>
<feature type="compositionally biased region" description="Basic and acidic residues" evidence="3">
    <location>
        <begin position="1"/>
        <end position="29"/>
    </location>
</feature>
<feature type="splice variant" id="VSP_060931" description="In isoform 2." evidence="4">
    <original>MKNKDYPLRSSMDELSTKNDNEIDLEKGPLPEYNSEDESTLPPY</original>
    <variation>ML</variation>
    <location>
        <begin position="1"/>
        <end position="44"/>
    </location>
</feature>
<feature type="mutagenesis site" description="Abolishes suppressor activity." evidence="4">
    <original>MKNKDYPLRSSMDELSTKNDNEIDLEKGPLPEYNSEDESTLPPY</original>
    <variation>ML</variation>
    <location>
        <begin position="1"/>
        <end position="44"/>
    </location>
</feature>
<feature type="mutagenesis site" description="Loss of interaction with wild-type isoforms." evidence="8">
    <original>N</original>
    <variation>NAFGGIGNAFGGIGNTIGR</variation>
    <location>
        <position position="312"/>
    </location>
</feature>
<keyword id="KW-0024">Alternative initiation</keyword>
<keyword id="KW-0963">Cytoplasm</keyword>
<keyword id="KW-0256">Endoplasmic reticulum</keyword>
<keyword id="KW-0472">Membrane</keyword>
<keyword id="KW-0800">Toxin</keyword>
<keyword id="KW-0812">Transmembrane</keyword>
<keyword id="KW-1133">Transmembrane helix</keyword>
<keyword id="KW-0926">Vacuole</keyword>
<name>WTF4_SCHKA</name>
<protein>
    <recommendedName>
        <fullName evidence="9">Meiotic driver wtf4</fullName>
    </recommendedName>
</protein>
<gene>
    <name evidence="9 11" type="primary">wtf4</name>
</gene>
<sequence length="337" mass="38171">MKNKDYPLRSSMDELSTKNDNEIDLEKGPLPEYNSEDESTLPPYSEIWKYIKTVSEDSSTGPTETTNPNVERRQEFKDSHPNIYSLLRLLISVLAVIVVFFTAWVCVNPLEKSIFGKVAFFVTIGITCPILLITIFCFFETWTQAVAQCIKVTVIFLAQCVKVTAVGLYNSREKWVVIIWLLWVVICYTLFLRSKFGNLNLNKALICSTCSISAALLLFLLYVRLPFWTLKHMFSGLFQVLGVQSCVVIVTKGLTYLFDKHIDATGYEIEASSLFVIGNFLFFYEMECPGALKRMPKFIRNGIASFLEGIGNIGRAFRGANDNNDIPLGEMEVESEV</sequence>
<evidence type="ECO:0000250" key="1">
    <source>
        <dbReference type="UniProtKB" id="O74420"/>
    </source>
</evidence>
<evidence type="ECO:0000255" key="2"/>
<evidence type="ECO:0000256" key="3">
    <source>
        <dbReference type="SAM" id="MobiDB-lite"/>
    </source>
</evidence>
<evidence type="ECO:0000269" key="4">
    <source>
    </source>
</evidence>
<evidence type="ECO:0000269" key="5">
    <source>
    </source>
</evidence>
<evidence type="ECO:0000269" key="6">
    <source>
    </source>
</evidence>
<evidence type="ECO:0000269" key="7">
    <source>
    </source>
</evidence>
<evidence type="ECO:0000269" key="8">
    <source>
    </source>
</evidence>
<evidence type="ECO:0000303" key="9">
    <source>
    </source>
</evidence>
<evidence type="ECO:0000305" key="10"/>
<evidence type="ECO:0000312" key="11">
    <source>
        <dbReference type="EMBL" id="ASF62178.1"/>
    </source>
</evidence>